<comment type="function">
    <text evidence="1">Putative zinc finger that may be involved in programmed cell death and defense response.</text>
</comment>
<comment type="subcellular location">
    <subcellularLocation>
        <location evidence="2">Nucleus</location>
    </subcellularLocation>
</comment>
<sequence length="172" mass="18054">MQSQIVCHGCRNILLYPRGAPSVCCAVCHAVSSTAPSPGMDIAHLICGGCRTLLMYTRNATSVRCSCCDTVNLVRPVSSIAHLNCGQCQTVLMYPYGAPSVKCAICNFITNTGMNTMRHLPPNGTSYTAPSTSAPTTQSQNVTVVVENPMTVDAKGKLVSNVVVGVTTGGKK</sequence>
<dbReference type="EMBL" id="DP000011">
    <property type="protein sequence ID" value="ABA99369.1"/>
    <property type="molecule type" value="Genomic_DNA"/>
</dbReference>
<dbReference type="EMBL" id="AP008218">
    <property type="protein sequence ID" value="BAF30269.1"/>
    <property type="molecule type" value="Genomic_DNA"/>
</dbReference>
<dbReference type="EMBL" id="AP014968">
    <property type="protein sequence ID" value="BAT18036.1"/>
    <property type="molecule type" value="Genomic_DNA"/>
</dbReference>
<dbReference type="EMBL" id="CM000149">
    <property type="protein sequence ID" value="EEE53591.1"/>
    <property type="molecule type" value="Genomic_DNA"/>
</dbReference>
<dbReference type="EMBL" id="AK111837">
    <property type="protein sequence ID" value="BAG99442.1"/>
    <property type="molecule type" value="mRNA"/>
</dbReference>
<dbReference type="RefSeq" id="XP_015620418.1">
    <property type="nucleotide sequence ID" value="XM_015764932.1"/>
</dbReference>
<dbReference type="FunCoup" id="Q2QMB3">
    <property type="interactions" value="722"/>
</dbReference>
<dbReference type="STRING" id="39947.Q2QMB3"/>
<dbReference type="PaxDb" id="39947-Q2QMB3"/>
<dbReference type="EnsemblPlants" id="Os12t0611000-01">
    <property type="protein sequence ID" value="Os12t0611000-01"/>
    <property type="gene ID" value="Os12g0611000"/>
</dbReference>
<dbReference type="Gramene" id="Os12t0611000-01">
    <property type="protein sequence ID" value="Os12t0611000-01"/>
    <property type="gene ID" value="Os12g0611000"/>
</dbReference>
<dbReference type="KEGG" id="dosa:Os12g0611000"/>
<dbReference type="eggNOG" id="ENOG502QQTC">
    <property type="taxonomic scope" value="Eukaryota"/>
</dbReference>
<dbReference type="HOGENOM" id="CLU_094017_0_0_1"/>
<dbReference type="InParanoid" id="Q2QMB3"/>
<dbReference type="OMA" id="PGMDIAH"/>
<dbReference type="OrthoDB" id="638133at2759"/>
<dbReference type="Proteomes" id="UP000000763">
    <property type="component" value="Chromosome 12"/>
</dbReference>
<dbReference type="Proteomes" id="UP000007752">
    <property type="component" value="Chromosome 12"/>
</dbReference>
<dbReference type="Proteomes" id="UP000059680">
    <property type="component" value="Chromosome 12"/>
</dbReference>
<dbReference type="GO" id="GO:0005634">
    <property type="term" value="C:nucleus"/>
    <property type="evidence" value="ECO:0007669"/>
    <property type="project" value="UniProtKB-SubCell"/>
</dbReference>
<dbReference type="InterPro" id="IPR040319">
    <property type="entry name" value="LSD1-like"/>
</dbReference>
<dbReference type="InterPro" id="IPR005735">
    <property type="entry name" value="Znf_LSD1"/>
</dbReference>
<dbReference type="NCBIfam" id="TIGR01053">
    <property type="entry name" value="LSD1"/>
    <property type="match status" value="3"/>
</dbReference>
<dbReference type="PANTHER" id="PTHR31747:SF14">
    <property type="entry name" value="PROTEIN LOL2"/>
    <property type="match status" value="1"/>
</dbReference>
<dbReference type="PANTHER" id="PTHR31747">
    <property type="entry name" value="PROTEIN LSD1"/>
    <property type="match status" value="1"/>
</dbReference>
<dbReference type="Pfam" id="PF06943">
    <property type="entry name" value="zf-LSD1"/>
    <property type="match status" value="3"/>
</dbReference>
<proteinExistence type="evidence at transcript level"/>
<feature type="chain" id="PRO_0000408488" description="Protein LOL2">
    <location>
        <begin position="1"/>
        <end position="172"/>
    </location>
</feature>
<feature type="region of interest" description="Putative zinc finger 1">
    <location>
        <begin position="4"/>
        <end position="34"/>
    </location>
</feature>
<feature type="region of interest" description="Putative zinc finger 2">
    <location>
        <begin position="44"/>
        <end position="74"/>
    </location>
</feature>
<feature type="region of interest" description="Putative zinc finger 3">
    <location>
        <begin position="82"/>
        <end position="112"/>
    </location>
</feature>
<gene>
    <name type="primary">LOL2</name>
    <name type="ordered locus">Os12g0611000</name>
    <name type="ordered locus">LOC_Os12g41700</name>
    <name type="ORF">OsJ_36836</name>
</gene>
<reference key="1">
    <citation type="journal article" date="2005" name="BMC Biol.">
        <title>The sequence of rice chromosomes 11 and 12, rich in disease resistance genes and recent gene duplications.</title>
        <authorList>
            <consortium name="The rice chromosomes 11 and 12 sequencing consortia"/>
        </authorList>
    </citation>
    <scope>NUCLEOTIDE SEQUENCE [LARGE SCALE GENOMIC DNA]</scope>
    <source>
        <strain>cv. Nipponbare</strain>
    </source>
</reference>
<reference key="2">
    <citation type="journal article" date="2005" name="Nature">
        <title>The map-based sequence of the rice genome.</title>
        <authorList>
            <consortium name="International rice genome sequencing project (IRGSP)"/>
        </authorList>
    </citation>
    <scope>NUCLEOTIDE SEQUENCE [LARGE SCALE GENOMIC DNA]</scope>
    <source>
        <strain>cv. Nipponbare</strain>
    </source>
</reference>
<reference key="3">
    <citation type="journal article" date="2008" name="Nucleic Acids Res.">
        <title>The rice annotation project database (RAP-DB): 2008 update.</title>
        <authorList>
            <consortium name="The rice annotation project (RAP)"/>
        </authorList>
    </citation>
    <scope>GENOME REANNOTATION</scope>
    <source>
        <strain>cv. Nipponbare</strain>
    </source>
</reference>
<reference key="4">
    <citation type="journal article" date="2013" name="Rice">
        <title>Improvement of the Oryza sativa Nipponbare reference genome using next generation sequence and optical map data.</title>
        <authorList>
            <person name="Kawahara Y."/>
            <person name="de la Bastide M."/>
            <person name="Hamilton J.P."/>
            <person name="Kanamori H."/>
            <person name="McCombie W.R."/>
            <person name="Ouyang S."/>
            <person name="Schwartz D.C."/>
            <person name="Tanaka T."/>
            <person name="Wu J."/>
            <person name="Zhou S."/>
            <person name="Childs K.L."/>
            <person name="Davidson R.M."/>
            <person name="Lin H."/>
            <person name="Quesada-Ocampo L."/>
            <person name="Vaillancourt B."/>
            <person name="Sakai H."/>
            <person name="Lee S.S."/>
            <person name="Kim J."/>
            <person name="Numa H."/>
            <person name="Itoh T."/>
            <person name="Buell C.R."/>
            <person name="Matsumoto T."/>
        </authorList>
    </citation>
    <scope>GENOME REANNOTATION</scope>
    <source>
        <strain>cv. Nipponbare</strain>
    </source>
</reference>
<reference key="5">
    <citation type="journal article" date="2005" name="PLoS Biol.">
        <title>The genomes of Oryza sativa: a history of duplications.</title>
        <authorList>
            <person name="Yu J."/>
            <person name="Wang J."/>
            <person name="Lin W."/>
            <person name="Li S."/>
            <person name="Li H."/>
            <person name="Zhou J."/>
            <person name="Ni P."/>
            <person name="Dong W."/>
            <person name="Hu S."/>
            <person name="Zeng C."/>
            <person name="Zhang J."/>
            <person name="Zhang Y."/>
            <person name="Li R."/>
            <person name="Xu Z."/>
            <person name="Li S."/>
            <person name="Li X."/>
            <person name="Zheng H."/>
            <person name="Cong L."/>
            <person name="Lin L."/>
            <person name="Yin J."/>
            <person name="Geng J."/>
            <person name="Li G."/>
            <person name="Shi J."/>
            <person name="Liu J."/>
            <person name="Lv H."/>
            <person name="Li J."/>
            <person name="Wang J."/>
            <person name="Deng Y."/>
            <person name="Ran L."/>
            <person name="Shi X."/>
            <person name="Wang X."/>
            <person name="Wu Q."/>
            <person name="Li C."/>
            <person name="Ren X."/>
            <person name="Wang J."/>
            <person name="Wang X."/>
            <person name="Li D."/>
            <person name="Liu D."/>
            <person name="Zhang X."/>
            <person name="Ji Z."/>
            <person name="Zhao W."/>
            <person name="Sun Y."/>
            <person name="Zhang Z."/>
            <person name="Bao J."/>
            <person name="Han Y."/>
            <person name="Dong L."/>
            <person name="Ji J."/>
            <person name="Chen P."/>
            <person name="Wu S."/>
            <person name="Liu J."/>
            <person name="Xiao Y."/>
            <person name="Bu D."/>
            <person name="Tan J."/>
            <person name="Yang L."/>
            <person name="Ye C."/>
            <person name="Zhang J."/>
            <person name="Xu J."/>
            <person name="Zhou Y."/>
            <person name="Yu Y."/>
            <person name="Zhang B."/>
            <person name="Zhuang S."/>
            <person name="Wei H."/>
            <person name="Liu B."/>
            <person name="Lei M."/>
            <person name="Yu H."/>
            <person name="Li Y."/>
            <person name="Xu H."/>
            <person name="Wei S."/>
            <person name="He X."/>
            <person name="Fang L."/>
            <person name="Zhang Z."/>
            <person name="Zhang Y."/>
            <person name="Huang X."/>
            <person name="Su Z."/>
            <person name="Tong W."/>
            <person name="Li J."/>
            <person name="Tong Z."/>
            <person name="Li S."/>
            <person name="Ye J."/>
            <person name="Wang L."/>
            <person name="Fang L."/>
            <person name="Lei T."/>
            <person name="Chen C.-S."/>
            <person name="Chen H.-C."/>
            <person name="Xu Z."/>
            <person name="Li H."/>
            <person name="Huang H."/>
            <person name="Zhang F."/>
            <person name="Xu H."/>
            <person name="Li N."/>
            <person name="Zhao C."/>
            <person name="Li S."/>
            <person name="Dong L."/>
            <person name="Huang Y."/>
            <person name="Li L."/>
            <person name="Xi Y."/>
            <person name="Qi Q."/>
            <person name="Li W."/>
            <person name="Zhang B."/>
            <person name="Hu W."/>
            <person name="Zhang Y."/>
            <person name="Tian X."/>
            <person name="Jiao Y."/>
            <person name="Liang X."/>
            <person name="Jin J."/>
            <person name="Gao L."/>
            <person name="Zheng W."/>
            <person name="Hao B."/>
            <person name="Liu S.-M."/>
            <person name="Wang W."/>
            <person name="Yuan L."/>
            <person name="Cao M."/>
            <person name="McDermott J."/>
            <person name="Samudrala R."/>
            <person name="Wang J."/>
            <person name="Wong G.K.-S."/>
            <person name="Yang H."/>
        </authorList>
    </citation>
    <scope>NUCLEOTIDE SEQUENCE [LARGE SCALE GENOMIC DNA]</scope>
    <source>
        <strain>cv. Nipponbare</strain>
    </source>
</reference>
<reference key="6">
    <citation type="journal article" date="2003" name="Science">
        <title>Collection, mapping, and annotation of over 28,000 cDNA clones from japonica rice.</title>
        <authorList>
            <consortium name="The rice full-length cDNA consortium"/>
        </authorList>
    </citation>
    <scope>NUCLEOTIDE SEQUENCE [LARGE SCALE MRNA]</scope>
    <source>
        <strain>cv. Nipponbare</strain>
    </source>
</reference>
<evidence type="ECO:0000250" key="1"/>
<evidence type="ECO:0000305" key="2"/>
<accession>Q2QMB3</accession>
<accession>A0A0P0YC51</accession>
<protein>
    <recommendedName>
        <fullName>Protein LOL2</fullName>
    </recommendedName>
    <alternativeName>
        <fullName>Protein LSD ONE LIKE 2</fullName>
        <shortName>OsLOL2</shortName>
    </alternativeName>
    <alternativeName>
        <fullName>Putative zinc finger LOL2</fullName>
    </alternativeName>
</protein>
<name>LOL2_ORYSJ</name>
<keyword id="KW-0539">Nucleus</keyword>
<keyword id="KW-1185">Reference proteome</keyword>
<organism>
    <name type="scientific">Oryza sativa subsp. japonica</name>
    <name type="common">Rice</name>
    <dbReference type="NCBI Taxonomy" id="39947"/>
    <lineage>
        <taxon>Eukaryota</taxon>
        <taxon>Viridiplantae</taxon>
        <taxon>Streptophyta</taxon>
        <taxon>Embryophyta</taxon>
        <taxon>Tracheophyta</taxon>
        <taxon>Spermatophyta</taxon>
        <taxon>Magnoliopsida</taxon>
        <taxon>Liliopsida</taxon>
        <taxon>Poales</taxon>
        <taxon>Poaceae</taxon>
        <taxon>BOP clade</taxon>
        <taxon>Oryzoideae</taxon>
        <taxon>Oryzeae</taxon>
        <taxon>Oryzinae</taxon>
        <taxon>Oryza</taxon>
        <taxon>Oryza sativa</taxon>
    </lineage>
</organism>